<keyword id="KW-1185">Reference proteome</keyword>
<organism>
    <name type="scientific">Mycobacterium bovis (strain ATCC BAA-935 / AF2122/97)</name>
    <dbReference type="NCBI Taxonomy" id="233413"/>
    <lineage>
        <taxon>Bacteria</taxon>
        <taxon>Bacillati</taxon>
        <taxon>Actinomycetota</taxon>
        <taxon>Actinomycetes</taxon>
        <taxon>Mycobacteriales</taxon>
        <taxon>Mycobacteriaceae</taxon>
        <taxon>Mycobacterium</taxon>
        <taxon>Mycobacterium tuberculosis complex</taxon>
    </lineage>
</organism>
<proteinExistence type="predicted"/>
<protein>
    <recommendedName>
        <fullName>Uncharacterized protein Mb2294</fullName>
    </recommendedName>
</protein>
<dbReference type="EMBL" id="LT708304">
    <property type="protein sequence ID" value="SIU00905.1"/>
    <property type="molecule type" value="Genomic_DNA"/>
</dbReference>
<dbReference type="RefSeq" id="NP_855943.1">
    <property type="nucleotide sequence ID" value="NC_002945.3"/>
</dbReference>
<dbReference type="RefSeq" id="WP_003899242.1">
    <property type="nucleotide sequence ID" value="NC_002945.4"/>
</dbReference>
<dbReference type="SMR" id="P64968"/>
<dbReference type="KEGG" id="mbo:BQ2027_MB2294"/>
<dbReference type="PATRIC" id="fig|233413.5.peg.2519"/>
<dbReference type="Proteomes" id="UP000001419">
    <property type="component" value="Chromosome"/>
</dbReference>
<dbReference type="InterPro" id="IPR024248">
    <property type="entry name" value="DUF2695"/>
</dbReference>
<dbReference type="Pfam" id="PF10905">
    <property type="entry name" value="DUF2695"/>
    <property type="match status" value="1"/>
</dbReference>
<sequence>MTTPPDKARRRFLRDAYKNAERVARTALLTIDQDQLEQLLDYVDERLGEQPCDHTARHAQRWAQSHRIEWETLAEGLQEFGGYCDCEIVMNVEPEAIFG</sequence>
<name>Y2294_MYCBO</name>
<gene>
    <name type="ordered locus">BQ2027_MB2294</name>
</gene>
<feature type="chain" id="PRO_0000103998" description="Uncharacterized protein Mb2294">
    <location>
        <begin position="1"/>
        <end position="99"/>
    </location>
</feature>
<accession>P64968</accession>
<accession>A0A1R3Y1H7</accession>
<accession>Q50692</accession>
<accession>X2BKL0</accession>
<reference key="1">
    <citation type="journal article" date="2003" name="Proc. Natl. Acad. Sci. U.S.A.">
        <title>The complete genome sequence of Mycobacterium bovis.</title>
        <authorList>
            <person name="Garnier T."/>
            <person name="Eiglmeier K."/>
            <person name="Camus J.-C."/>
            <person name="Medina N."/>
            <person name="Mansoor H."/>
            <person name="Pryor M."/>
            <person name="Duthoy S."/>
            <person name="Grondin S."/>
            <person name="Lacroix C."/>
            <person name="Monsempe C."/>
            <person name="Simon S."/>
            <person name="Harris B."/>
            <person name="Atkin R."/>
            <person name="Doggett J."/>
            <person name="Mayes R."/>
            <person name="Keating L."/>
            <person name="Wheeler P.R."/>
            <person name="Parkhill J."/>
            <person name="Barrell B.G."/>
            <person name="Cole S.T."/>
            <person name="Gordon S.V."/>
            <person name="Hewinson R.G."/>
        </authorList>
    </citation>
    <scope>NUCLEOTIDE SEQUENCE [LARGE SCALE GENOMIC DNA]</scope>
    <source>
        <strain>ATCC BAA-935 / AF2122/97</strain>
    </source>
</reference>
<reference key="2">
    <citation type="journal article" date="2017" name="Genome Announc.">
        <title>Updated reference genome sequence and annotation of Mycobacterium bovis AF2122/97.</title>
        <authorList>
            <person name="Malone K.M."/>
            <person name="Farrell D."/>
            <person name="Stuber T.P."/>
            <person name="Schubert O.T."/>
            <person name="Aebersold R."/>
            <person name="Robbe-Austerman S."/>
            <person name="Gordon S.V."/>
        </authorList>
    </citation>
    <scope>NUCLEOTIDE SEQUENCE [LARGE SCALE GENOMIC DNA]</scope>
    <scope>GENOME REANNOTATION</scope>
    <source>
        <strain>ATCC BAA-935 / AF2122/97</strain>
    </source>
</reference>